<proteinExistence type="inferred from homology"/>
<keyword id="KW-0963">Cytoplasm</keyword>
<keyword id="KW-0488">Methylation</keyword>
<keyword id="KW-0648">Protein biosynthesis</keyword>
<keyword id="KW-1185">Reference proteome</keyword>
<reference key="1">
    <citation type="journal article" date="2007" name="Appl. Environ. Microbiol.">
        <title>Genome sequence of the cellulolytic gliding bacterium Cytophaga hutchinsonii.</title>
        <authorList>
            <person name="Xie G."/>
            <person name="Bruce D.C."/>
            <person name="Challacombe J.F."/>
            <person name="Chertkov O."/>
            <person name="Detter J.C."/>
            <person name="Gilna P."/>
            <person name="Han C.S."/>
            <person name="Lucas S."/>
            <person name="Misra M."/>
            <person name="Myers G.L."/>
            <person name="Richardson P."/>
            <person name="Tapia R."/>
            <person name="Thayer N."/>
            <person name="Thompson L.S."/>
            <person name="Brettin T.S."/>
            <person name="Henrissat B."/>
            <person name="Wilson D.B."/>
            <person name="McBride M.J."/>
        </authorList>
    </citation>
    <scope>NUCLEOTIDE SEQUENCE [LARGE SCALE GENOMIC DNA]</scope>
    <source>
        <strain>ATCC 33406 / DSM 1761 / JCM 20678 / CIP 103989 / IAM 12607 / NBRC 15051 / NCIMB 9469 / D465</strain>
    </source>
</reference>
<name>RF1_CYTH3</name>
<sequence length="359" mass="40596">MVDKLEAIKSRFDEVAEAILDPNIMSDMKRYASLNKEYKELNKIVEVYAQYKNILDNIESSKKVLSVEKDPDFREMAKEELETLAVQKDDIELVIKELLIPKDPNDSKNIILEIRGGTGGDEASIFAGDIFRMYQRYCDRMGWKMELIDATEGTSGGYKEIICGISGEDVYGKLKFESGVHRVQRVPATETQGRIHTSAASVAVLPEVEELDVQLNMNDIRKDTFCSSGPGGQSVNTTYSAIRLTHIPSGTVVQCQDEKSQIKNFEKALKVLRSRIYEIEYKKQQDELGKERNSMIGSGDRSDKIRTYNYPQSRVTDHRIGHTVHNLPAVMDGNIDDFIEELRLAENAERLKEGAQETA</sequence>
<feature type="chain" id="PRO_0000263262" description="Peptide chain release factor 1">
    <location>
        <begin position="1"/>
        <end position="359"/>
    </location>
</feature>
<feature type="modified residue" description="N5-methylglutamine" evidence="1">
    <location>
        <position position="233"/>
    </location>
</feature>
<organism>
    <name type="scientific">Cytophaga hutchinsonii (strain ATCC 33406 / DSM 1761 / CIP 103989 / NBRC 15051 / NCIMB 9469 / D465)</name>
    <dbReference type="NCBI Taxonomy" id="269798"/>
    <lineage>
        <taxon>Bacteria</taxon>
        <taxon>Pseudomonadati</taxon>
        <taxon>Bacteroidota</taxon>
        <taxon>Cytophagia</taxon>
        <taxon>Cytophagales</taxon>
        <taxon>Cytophagaceae</taxon>
        <taxon>Cytophaga</taxon>
    </lineage>
</organism>
<comment type="function">
    <text evidence="1">Peptide chain release factor 1 directs the termination of translation in response to the peptide chain termination codons UAG and UAA.</text>
</comment>
<comment type="subcellular location">
    <subcellularLocation>
        <location evidence="1">Cytoplasm</location>
    </subcellularLocation>
</comment>
<comment type="PTM">
    <text evidence="1">Methylated by PrmC. Methylation increases the termination efficiency of RF1.</text>
</comment>
<comment type="similarity">
    <text evidence="1">Belongs to the prokaryotic/mitochondrial release factor family.</text>
</comment>
<accession>Q11NS4</accession>
<dbReference type="EMBL" id="CP000383">
    <property type="protein sequence ID" value="ABG60939.1"/>
    <property type="molecule type" value="Genomic_DNA"/>
</dbReference>
<dbReference type="RefSeq" id="WP_011587044.1">
    <property type="nucleotide sequence ID" value="NC_008255.1"/>
</dbReference>
<dbReference type="SMR" id="Q11NS4"/>
<dbReference type="STRING" id="269798.CHU_3706"/>
<dbReference type="KEGG" id="chu:CHU_3706"/>
<dbReference type="eggNOG" id="COG0216">
    <property type="taxonomic scope" value="Bacteria"/>
</dbReference>
<dbReference type="HOGENOM" id="CLU_036856_0_1_10"/>
<dbReference type="OrthoDB" id="9806673at2"/>
<dbReference type="Proteomes" id="UP000001822">
    <property type="component" value="Chromosome"/>
</dbReference>
<dbReference type="GO" id="GO:0005737">
    <property type="term" value="C:cytoplasm"/>
    <property type="evidence" value="ECO:0007669"/>
    <property type="project" value="UniProtKB-SubCell"/>
</dbReference>
<dbReference type="GO" id="GO:0016149">
    <property type="term" value="F:translation release factor activity, codon specific"/>
    <property type="evidence" value="ECO:0007669"/>
    <property type="project" value="UniProtKB-UniRule"/>
</dbReference>
<dbReference type="FunFam" id="3.30.160.20:FF:000004">
    <property type="entry name" value="Peptide chain release factor 1"/>
    <property type="match status" value="1"/>
</dbReference>
<dbReference type="FunFam" id="3.30.70.1660:FF:000002">
    <property type="entry name" value="Peptide chain release factor 1"/>
    <property type="match status" value="1"/>
</dbReference>
<dbReference type="Gene3D" id="3.30.160.20">
    <property type="match status" value="1"/>
</dbReference>
<dbReference type="Gene3D" id="3.30.70.1660">
    <property type="match status" value="1"/>
</dbReference>
<dbReference type="Gene3D" id="6.10.140.1950">
    <property type="match status" value="1"/>
</dbReference>
<dbReference type="HAMAP" id="MF_00093">
    <property type="entry name" value="Rel_fac_1"/>
    <property type="match status" value="1"/>
</dbReference>
<dbReference type="InterPro" id="IPR005139">
    <property type="entry name" value="PCRF"/>
</dbReference>
<dbReference type="InterPro" id="IPR000352">
    <property type="entry name" value="Pep_chain_release_fac_I"/>
</dbReference>
<dbReference type="InterPro" id="IPR045853">
    <property type="entry name" value="Pep_chain_release_fac_I_sf"/>
</dbReference>
<dbReference type="InterPro" id="IPR050057">
    <property type="entry name" value="Prokaryotic/Mito_RF"/>
</dbReference>
<dbReference type="InterPro" id="IPR004373">
    <property type="entry name" value="RF-1"/>
</dbReference>
<dbReference type="NCBIfam" id="TIGR00019">
    <property type="entry name" value="prfA"/>
    <property type="match status" value="1"/>
</dbReference>
<dbReference type="NCBIfam" id="NF001859">
    <property type="entry name" value="PRK00591.1"/>
    <property type="match status" value="1"/>
</dbReference>
<dbReference type="PANTHER" id="PTHR43804">
    <property type="entry name" value="LD18447P"/>
    <property type="match status" value="1"/>
</dbReference>
<dbReference type="PANTHER" id="PTHR43804:SF7">
    <property type="entry name" value="LD18447P"/>
    <property type="match status" value="1"/>
</dbReference>
<dbReference type="Pfam" id="PF03462">
    <property type="entry name" value="PCRF"/>
    <property type="match status" value="1"/>
</dbReference>
<dbReference type="Pfam" id="PF00472">
    <property type="entry name" value="RF-1"/>
    <property type="match status" value="1"/>
</dbReference>
<dbReference type="SMART" id="SM00937">
    <property type="entry name" value="PCRF"/>
    <property type="match status" value="1"/>
</dbReference>
<dbReference type="SUPFAM" id="SSF75620">
    <property type="entry name" value="Release factor"/>
    <property type="match status" value="1"/>
</dbReference>
<protein>
    <recommendedName>
        <fullName evidence="1">Peptide chain release factor 1</fullName>
        <shortName evidence="1">RF-1</shortName>
    </recommendedName>
</protein>
<evidence type="ECO:0000255" key="1">
    <source>
        <dbReference type="HAMAP-Rule" id="MF_00093"/>
    </source>
</evidence>
<gene>
    <name evidence="1" type="primary">prfA</name>
    <name type="ordered locus">CHU_3706</name>
</gene>